<protein>
    <recommendedName>
        <fullName evidence="1">Ribosome biogenesis protein ytm1</fullName>
    </recommendedName>
</protein>
<sequence>MSASAASQAAQRQVRVQLTSKQEDIALPEDTGPILIPTGLRRYALSTLVNNLLGNEKPIPFEFLINGAFLRTSIDEYLTANGISAETTLEIEYVRALIPPLHIASFEHDDWVSSVDVLSATSPAASWASASVPQGQERILSGSYDGFLRVWNMSSQVVATSPAATEGGHTASIKAAKFVSPNSIVSAGLDRTVRLWKYSESDDGFSGTIAPQLELYGHKLDINSLAVHAPSNRILSASSDHMVGFWSTKKSDAPAAPENLLPSAASRSSKRRKLNSSVSTPQRGPLALMSGHTAPVSAAIFDANDSTVGYSTSWDHSLRTWDLVTSSLVDTRTTSHSLLALAHLPDHHLLAAGTSARHITLIDPRVSAATIAAMTLRGHTNAVVSLARDPHSNYGLISGSHDGTCRIWDIRATKTDKDGVVGESVYSITRKSLEEEGKSASKRVGGEGVKVFGVCWDAAVGIVSAGEDKRIQINRGEGVLSST</sequence>
<evidence type="ECO:0000255" key="1">
    <source>
        <dbReference type="HAMAP-Rule" id="MF_03029"/>
    </source>
</evidence>
<evidence type="ECO:0000256" key="2">
    <source>
        <dbReference type="SAM" id="MobiDB-lite"/>
    </source>
</evidence>
<evidence type="ECO:0000305" key="3"/>
<accession>Q0CLJ4</accession>
<reference key="1">
    <citation type="submission" date="2005-09" db="EMBL/GenBank/DDBJ databases">
        <title>Annotation of the Aspergillus terreus NIH2624 genome.</title>
        <authorList>
            <person name="Birren B.W."/>
            <person name="Lander E.S."/>
            <person name="Galagan J.E."/>
            <person name="Nusbaum C."/>
            <person name="Devon K."/>
            <person name="Henn M."/>
            <person name="Ma L.-J."/>
            <person name="Jaffe D.B."/>
            <person name="Butler J."/>
            <person name="Alvarez P."/>
            <person name="Gnerre S."/>
            <person name="Grabherr M."/>
            <person name="Kleber M."/>
            <person name="Mauceli E.W."/>
            <person name="Brockman W."/>
            <person name="Rounsley S."/>
            <person name="Young S.K."/>
            <person name="LaButti K."/>
            <person name="Pushparaj V."/>
            <person name="DeCaprio D."/>
            <person name="Crawford M."/>
            <person name="Koehrsen M."/>
            <person name="Engels R."/>
            <person name="Montgomery P."/>
            <person name="Pearson M."/>
            <person name="Howarth C."/>
            <person name="Larson L."/>
            <person name="Luoma S."/>
            <person name="White J."/>
            <person name="Alvarado L."/>
            <person name="Kodira C.D."/>
            <person name="Zeng Q."/>
            <person name="Oleary S."/>
            <person name="Yandava C."/>
            <person name="Denning D.W."/>
            <person name="Nierman W.C."/>
            <person name="Milne T."/>
            <person name="Madden K."/>
        </authorList>
    </citation>
    <scope>NUCLEOTIDE SEQUENCE [LARGE SCALE GENOMIC DNA]</scope>
    <source>
        <strain>NIH 2624 / FGSC A1156</strain>
    </source>
</reference>
<keyword id="KW-0539">Nucleus</keyword>
<keyword id="KW-1185">Reference proteome</keyword>
<keyword id="KW-0677">Repeat</keyword>
<keyword id="KW-0690">Ribosome biogenesis</keyword>
<keyword id="KW-0698">rRNA processing</keyword>
<keyword id="KW-0853">WD repeat</keyword>
<gene>
    <name type="primary">ytm1</name>
    <name type="ORF">ATEG_05440</name>
</gene>
<feature type="chain" id="PRO_0000369579" description="Ribosome biogenesis protein ytm1">
    <location>
        <begin position="1"/>
        <end position="483"/>
    </location>
</feature>
<feature type="repeat" description="WD 1">
    <location>
        <begin position="117"/>
        <end position="161"/>
    </location>
</feature>
<feature type="repeat" description="WD 2">
    <location>
        <begin position="168"/>
        <end position="206"/>
    </location>
</feature>
<feature type="repeat" description="WD 3">
    <location>
        <begin position="217"/>
        <end position="256"/>
    </location>
</feature>
<feature type="repeat" description="WD 4">
    <location>
        <begin position="291"/>
        <end position="331"/>
    </location>
</feature>
<feature type="repeat" description="WD 5">
    <location>
        <begin position="333"/>
        <end position="372"/>
    </location>
</feature>
<feature type="repeat" description="WD 6">
    <location>
        <begin position="378"/>
        <end position="418"/>
    </location>
</feature>
<feature type="repeat" description="WD 7">
    <location>
        <begin position="446"/>
        <end position="483"/>
    </location>
</feature>
<feature type="region of interest" description="Ubiquitin-like (UBL) domain" evidence="1">
    <location>
        <begin position="14"/>
        <end position="95"/>
    </location>
</feature>
<feature type="region of interest" description="Disordered" evidence="2">
    <location>
        <begin position="251"/>
        <end position="288"/>
    </location>
</feature>
<organism>
    <name type="scientific">Aspergillus terreus (strain NIH 2624 / FGSC A1156)</name>
    <dbReference type="NCBI Taxonomy" id="341663"/>
    <lineage>
        <taxon>Eukaryota</taxon>
        <taxon>Fungi</taxon>
        <taxon>Dikarya</taxon>
        <taxon>Ascomycota</taxon>
        <taxon>Pezizomycotina</taxon>
        <taxon>Eurotiomycetes</taxon>
        <taxon>Eurotiomycetidae</taxon>
        <taxon>Eurotiales</taxon>
        <taxon>Aspergillaceae</taxon>
        <taxon>Aspergillus</taxon>
        <taxon>Aspergillus subgen. Circumdati</taxon>
    </lineage>
</organism>
<comment type="function">
    <text evidence="1">Component of the NOP7 complex, which is required for maturation of the 25S and 5.8S ribosomal RNAs and formation of the 60S ribosome.</text>
</comment>
<comment type="subunit">
    <text evidence="1">Component of the NOP7 complex, composed of erb1, nop7 and ytm1. The complex is held together by erb1, which interacts with nop7 via its N-terminal domain and with ytm1 via a high-affinity interaction between the seven-bladed beta-propeller domains of the 2 proteins. The NOP7 complex associates with the 66S pre-ribosome. Interacts (via UBL domain) with mdn1 (via VWFA/MIDAS domain).</text>
</comment>
<comment type="subcellular location">
    <subcellularLocation>
        <location evidence="1">Nucleus</location>
        <location evidence="1">Nucleolus</location>
    </subcellularLocation>
    <subcellularLocation>
        <location evidence="1">Nucleus</location>
        <location evidence="1">Nucleoplasm</location>
    </subcellularLocation>
</comment>
<comment type="similarity">
    <text evidence="1">Belongs to the WD repeat WDR12/YTM1 family.</text>
</comment>
<comment type="sequence caution" evidence="3">
    <conflict type="erroneous gene model prediction">
        <sequence resource="EMBL-CDS" id="EAU34509"/>
    </conflict>
</comment>
<dbReference type="EMBL" id="CH476600">
    <property type="protein sequence ID" value="EAU34509.1"/>
    <property type="status" value="ALT_SEQ"/>
    <property type="molecule type" value="Genomic_DNA"/>
</dbReference>
<dbReference type="RefSeq" id="XP_001214618.1">
    <property type="nucleotide sequence ID" value="XM_001214618.1"/>
</dbReference>
<dbReference type="SMR" id="Q0CLJ4"/>
<dbReference type="STRING" id="341663.Q0CLJ4"/>
<dbReference type="EnsemblFungi" id="EAU34509">
    <property type="protein sequence ID" value="EAU34509"/>
    <property type="gene ID" value="ATEG_05440"/>
</dbReference>
<dbReference type="GeneID" id="4321168"/>
<dbReference type="eggNOG" id="KOG0313">
    <property type="taxonomic scope" value="Eukaryota"/>
</dbReference>
<dbReference type="OrthoDB" id="10251381at2759"/>
<dbReference type="Proteomes" id="UP000007963">
    <property type="component" value="Unassembled WGS sequence"/>
</dbReference>
<dbReference type="GO" id="GO:0005654">
    <property type="term" value="C:nucleoplasm"/>
    <property type="evidence" value="ECO:0007669"/>
    <property type="project" value="UniProtKB-SubCell"/>
</dbReference>
<dbReference type="GO" id="GO:0070545">
    <property type="term" value="C:PeBoW complex"/>
    <property type="evidence" value="ECO:0007669"/>
    <property type="project" value="EnsemblFungi"/>
</dbReference>
<dbReference type="GO" id="GO:0030687">
    <property type="term" value="C:preribosome, large subunit precursor"/>
    <property type="evidence" value="ECO:0007669"/>
    <property type="project" value="UniProtKB-UniRule"/>
</dbReference>
<dbReference type="GO" id="GO:0043021">
    <property type="term" value="F:ribonucleoprotein complex binding"/>
    <property type="evidence" value="ECO:0007669"/>
    <property type="project" value="UniProtKB-UniRule"/>
</dbReference>
<dbReference type="GO" id="GO:0051276">
    <property type="term" value="P:chromosome organization"/>
    <property type="evidence" value="ECO:0007669"/>
    <property type="project" value="EnsemblFungi"/>
</dbReference>
<dbReference type="GO" id="GO:0000466">
    <property type="term" value="P:maturation of 5.8S rRNA from tricistronic rRNA transcript (SSU-rRNA, 5.8S rRNA, LSU-rRNA)"/>
    <property type="evidence" value="ECO:0007669"/>
    <property type="project" value="UniProtKB-UniRule"/>
</dbReference>
<dbReference type="GO" id="GO:0000463">
    <property type="term" value="P:maturation of LSU-rRNA from tricistronic rRNA transcript (SSU-rRNA, 5.8S rRNA, LSU-rRNA)"/>
    <property type="evidence" value="ECO:0007669"/>
    <property type="project" value="UniProtKB-UniRule"/>
</dbReference>
<dbReference type="GO" id="GO:0110136">
    <property type="term" value="P:protein-RNA complex remodeling"/>
    <property type="evidence" value="ECO:0007669"/>
    <property type="project" value="EnsemblFungi"/>
</dbReference>
<dbReference type="FunFam" id="2.130.10.10:FF:000593">
    <property type="entry name" value="Ribosome biogenesis protein ytm1"/>
    <property type="match status" value="1"/>
</dbReference>
<dbReference type="Gene3D" id="2.130.10.10">
    <property type="entry name" value="YVTN repeat-like/Quinoprotein amine dehydrogenase"/>
    <property type="match status" value="1"/>
</dbReference>
<dbReference type="HAMAP" id="MF_03029">
    <property type="entry name" value="WDR12"/>
    <property type="match status" value="1"/>
</dbReference>
<dbReference type="InterPro" id="IPR020472">
    <property type="entry name" value="G-protein_beta_WD-40_rep"/>
</dbReference>
<dbReference type="InterPro" id="IPR012972">
    <property type="entry name" value="NLE"/>
</dbReference>
<dbReference type="InterPro" id="IPR015943">
    <property type="entry name" value="WD40/YVTN_repeat-like_dom_sf"/>
</dbReference>
<dbReference type="InterPro" id="IPR019775">
    <property type="entry name" value="WD40_repeat_CS"/>
</dbReference>
<dbReference type="InterPro" id="IPR036322">
    <property type="entry name" value="WD40_repeat_dom_sf"/>
</dbReference>
<dbReference type="InterPro" id="IPR001680">
    <property type="entry name" value="WD40_rpt"/>
</dbReference>
<dbReference type="InterPro" id="IPR028599">
    <property type="entry name" value="WDR12/Ytm1"/>
</dbReference>
<dbReference type="PANTHER" id="PTHR19855:SF11">
    <property type="entry name" value="RIBOSOME BIOGENESIS PROTEIN WDR12"/>
    <property type="match status" value="1"/>
</dbReference>
<dbReference type="PANTHER" id="PTHR19855">
    <property type="entry name" value="WD40 REPEAT PROTEIN 12, 37"/>
    <property type="match status" value="1"/>
</dbReference>
<dbReference type="Pfam" id="PF08154">
    <property type="entry name" value="NLE"/>
    <property type="match status" value="1"/>
</dbReference>
<dbReference type="Pfam" id="PF00400">
    <property type="entry name" value="WD40"/>
    <property type="match status" value="5"/>
</dbReference>
<dbReference type="PRINTS" id="PR00320">
    <property type="entry name" value="GPROTEINBRPT"/>
</dbReference>
<dbReference type="SMART" id="SM00320">
    <property type="entry name" value="WD40"/>
    <property type="match status" value="6"/>
</dbReference>
<dbReference type="SUPFAM" id="SSF50978">
    <property type="entry name" value="WD40 repeat-like"/>
    <property type="match status" value="1"/>
</dbReference>
<dbReference type="PROSITE" id="PS00678">
    <property type="entry name" value="WD_REPEATS_1"/>
    <property type="match status" value="2"/>
</dbReference>
<dbReference type="PROSITE" id="PS50082">
    <property type="entry name" value="WD_REPEATS_2"/>
    <property type="match status" value="5"/>
</dbReference>
<dbReference type="PROSITE" id="PS50294">
    <property type="entry name" value="WD_REPEATS_REGION"/>
    <property type="match status" value="1"/>
</dbReference>
<name>YTM1_ASPTN</name>
<proteinExistence type="inferred from homology"/>